<evidence type="ECO:0000250" key="1">
    <source>
        <dbReference type="UniProtKB" id="P00509"/>
    </source>
</evidence>
<evidence type="ECO:0000250" key="2">
    <source>
        <dbReference type="UniProtKB" id="P53090"/>
    </source>
</evidence>
<evidence type="ECO:0000255" key="3"/>
<evidence type="ECO:0000269" key="4">
    <source>
    </source>
</evidence>
<evidence type="ECO:0000305" key="5"/>
<evidence type="ECO:0000312" key="6">
    <source>
        <dbReference type="EMBL" id="CAB16394.1"/>
    </source>
</evidence>
<keyword id="KW-0032">Aminotransferase</keyword>
<keyword id="KW-0963">Cytoplasm</keyword>
<keyword id="KW-0663">Pyridoxal phosphate</keyword>
<keyword id="KW-1185">Reference proteome</keyword>
<keyword id="KW-0808">Transferase</keyword>
<sequence length="474" mass="53167">MAAQPKDLSHHLSVESASRKQSPLKAVALSKSSRNIKIISLAGGLPNPEYFPIREMDAEIPAINSWKKDSSNSGKLDTVSVPMSSSDSDVLPLSVALQYGQGSGAALLSQFLKEHTRIIHNPPYEGWNIIMTTGNTSCLDIALRMLTNRGDSILVEKYSFPSALQSMRPLGLSCIPIDMDQFGFLPESMDDILTNWDATSYGSPKPHVLYTIPTGQNPTGSTLSVERRKQIYTLAQKHDIIILEDEPYYYLQMDAYEGKPEAADKAFTNEQFVKELIPSFLSMDVDGRVIRMDSLSKVVAPGSRVGWFTAQPLFIERGLRAAETATQSASGISQGILYAMFKHWGQDGYLEWLKHIRYSYTLRRNYLLYAMDTYLPKSVCSYIPPVAGMFIWFEVDKSRYIHADKNESIPEIESKIHAEAVEEGVNLACGNWFVVDPRVNDKIFFRVTFAHAELEEFNVAIERFAGVLKNNFKC</sequence>
<comment type="function">
    <text evidence="2">Has aromatic amino acid transaminase activity.</text>
</comment>
<comment type="catalytic activity">
    <reaction>
        <text>an aromatic L-alpha-amino acid + 2-oxoglutarate = an aromatic oxo-acid + L-glutamate</text>
        <dbReference type="Rhea" id="RHEA:17533"/>
        <dbReference type="ChEBI" id="CHEBI:16810"/>
        <dbReference type="ChEBI" id="CHEBI:29985"/>
        <dbReference type="ChEBI" id="CHEBI:73309"/>
        <dbReference type="ChEBI" id="CHEBI:84824"/>
        <dbReference type="EC" id="2.6.1.57"/>
    </reaction>
</comment>
<comment type="cofactor">
    <cofactor evidence="1">
        <name>pyridoxal 5'-phosphate</name>
        <dbReference type="ChEBI" id="CHEBI:597326"/>
    </cofactor>
</comment>
<comment type="subcellular location">
    <subcellularLocation>
        <location evidence="4">Cytoplasm</location>
    </subcellularLocation>
</comment>
<comment type="similarity">
    <text evidence="3">Belongs to the class-I pyridoxal-phosphate-dependent aminotransferase family.</text>
</comment>
<feature type="chain" id="PRO_0000308489" description="Aromatic amino acid aminotransferase C56E4.03">
    <location>
        <begin position="1"/>
        <end position="474"/>
    </location>
</feature>
<reference evidence="6" key="1">
    <citation type="journal article" date="2002" name="Nature">
        <title>The genome sequence of Schizosaccharomyces pombe.</title>
        <authorList>
            <person name="Wood V."/>
            <person name="Gwilliam R."/>
            <person name="Rajandream M.A."/>
            <person name="Lyne M.H."/>
            <person name="Lyne R."/>
            <person name="Stewart A."/>
            <person name="Sgouros J.G."/>
            <person name="Peat N."/>
            <person name="Hayles J."/>
            <person name="Baker S.G."/>
            <person name="Basham D."/>
            <person name="Bowman S."/>
            <person name="Brooks K."/>
            <person name="Brown D."/>
            <person name="Brown S."/>
            <person name="Chillingworth T."/>
            <person name="Churcher C.M."/>
            <person name="Collins M."/>
            <person name="Connor R."/>
            <person name="Cronin A."/>
            <person name="Davis P."/>
            <person name="Feltwell T."/>
            <person name="Fraser A."/>
            <person name="Gentles S."/>
            <person name="Goble A."/>
            <person name="Hamlin N."/>
            <person name="Harris D.E."/>
            <person name="Hidalgo J."/>
            <person name="Hodgson G."/>
            <person name="Holroyd S."/>
            <person name="Hornsby T."/>
            <person name="Howarth S."/>
            <person name="Huckle E.J."/>
            <person name="Hunt S."/>
            <person name="Jagels K."/>
            <person name="James K.D."/>
            <person name="Jones L."/>
            <person name="Jones M."/>
            <person name="Leather S."/>
            <person name="McDonald S."/>
            <person name="McLean J."/>
            <person name="Mooney P."/>
            <person name="Moule S."/>
            <person name="Mungall K.L."/>
            <person name="Murphy L.D."/>
            <person name="Niblett D."/>
            <person name="Odell C."/>
            <person name="Oliver K."/>
            <person name="O'Neil S."/>
            <person name="Pearson D."/>
            <person name="Quail M.A."/>
            <person name="Rabbinowitsch E."/>
            <person name="Rutherford K.M."/>
            <person name="Rutter S."/>
            <person name="Saunders D."/>
            <person name="Seeger K."/>
            <person name="Sharp S."/>
            <person name="Skelton J."/>
            <person name="Simmonds M.N."/>
            <person name="Squares R."/>
            <person name="Squares S."/>
            <person name="Stevens K."/>
            <person name="Taylor K."/>
            <person name="Taylor R.G."/>
            <person name="Tivey A."/>
            <person name="Walsh S.V."/>
            <person name="Warren T."/>
            <person name="Whitehead S."/>
            <person name="Woodward J.R."/>
            <person name="Volckaert G."/>
            <person name="Aert R."/>
            <person name="Robben J."/>
            <person name="Grymonprez B."/>
            <person name="Weltjens I."/>
            <person name="Vanstreels E."/>
            <person name="Rieger M."/>
            <person name="Schaefer M."/>
            <person name="Mueller-Auer S."/>
            <person name="Gabel C."/>
            <person name="Fuchs M."/>
            <person name="Duesterhoeft A."/>
            <person name="Fritzc C."/>
            <person name="Holzer E."/>
            <person name="Moestl D."/>
            <person name="Hilbert H."/>
            <person name="Borzym K."/>
            <person name="Langer I."/>
            <person name="Beck A."/>
            <person name="Lehrach H."/>
            <person name="Reinhardt R."/>
            <person name="Pohl T.M."/>
            <person name="Eger P."/>
            <person name="Zimmermann W."/>
            <person name="Wedler H."/>
            <person name="Wambutt R."/>
            <person name="Purnelle B."/>
            <person name="Goffeau A."/>
            <person name="Cadieu E."/>
            <person name="Dreano S."/>
            <person name="Gloux S."/>
            <person name="Lelaure V."/>
            <person name="Mottier S."/>
            <person name="Galibert F."/>
            <person name="Aves S.J."/>
            <person name="Xiang Z."/>
            <person name="Hunt C."/>
            <person name="Moore K."/>
            <person name="Hurst S.M."/>
            <person name="Lucas M."/>
            <person name="Rochet M."/>
            <person name="Gaillardin C."/>
            <person name="Tallada V.A."/>
            <person name="Garzon A."/>
            <person name="Thode G."/>
            <person name="Daga R.R."/>
            <person name="Cruzado L."/>
            <person name="Jimenez J."/>
            <person name="Sanchez M."/>
            <person name="del Rey F."/>
            <person name="Benito J."/>
            <person name="Dominguez A."/>
            <person name="Revuelta J.L."/>
            <person name="Moreno S."/>
            <person name="Armstrong J."/>
            <person name="Forsburg S.L."/>
            <person name="Cerutti L."/>
            <person name="Lowe T."/>
            <person name="McCombie W.R."/>
            <person name="Paulsen I."/>
            <person name="Potashkin J."/>
            <person name="Shpakovski G.V."/>
            <person name="Ussery D."/>
            <person name="Barrell B.G."/>
            <person name="Nurse P."/>
        </authorList>
    </citation>
    <scope>NUCLEOTIDE SEQUENCE [LARGE SCALE GENOMIC DNA]</scope>
    <source>
        <strain>972 / ATCC 24843</strain>
    </source>
</reference>
<reference evidence="5" key="2">
    <citation type="journal article" date="2006" name="Nat. Biotechnol.">
        <title>ORFeome cloning and global analysis of protein localization in the fission yeast Schizosaccharomyces pombe.</title>
        <authorList>
            <person name="Matsuyama A."/>
            <person name="Arai R."/>
            <person name="Yashiroda Y."/>
            <person name="Shirai A."/>
            <person name="Kamata A."/>
            <person name="Sekido S."/>
            <person name="Kobayashi Y."/>
            <person name="Hashimoto A."/>
            <person name="Hamamoto M."/>
            <person name="Hiraoka Y."/>
            <person name="Horinouchi S."/>
            <person name="Yoshida M."/>
        </authorList>
    </citation>
    <scope>SUBCELLULAR LOCATION [LARGE SCALE ANALYSIS]</scope>
</reference>
<accession>O14192</accession>
<proteinExistence type="inferred from homology"/>
<gene>
    <name type="ORF">SPAC56E4.03</name>
</gene>
<dbReference type="EC" id="2.6.1.57"/>
<dbReference type="EMBL" id="CU329670">
    <property type="protein sequence ID" value="CAB16394.1"/>
    <property type="molecule type" value="Genomic_DNA"/>
</dbReference>
<dbReference type="PIR" id="T38905">
    <property type="entry name" value="T38905"/>
</dbReference>
<dbReference type="RefSeq" id="NP_593270.1">
    <property type="nucleotide sequence ID" value="NM_001018667.2"/>
</dbReference>
<dbReference type="SMR" id="O14192"/>
<dbReference type="BioGRID" id="279772">
    <property type="interactions" value="10"/>
</dbReference>
<dbReference type="FunCoup" id="O14192">
    <property type="interactions" value="159"/>
</dbReference>
<dbReference type="STRING" id="284812.O14192"/>
<dbReference type="iPTMnet" id="O14192"/>
<dbReference type="PaxDb" id="4896-SPAC56E4.03.1"/>
<dbReference type="EnsemblFungi" id="SPAC56E4.03.1">
    <property type="protein sequence ID" value="SPAC56E4.03.1:pep"/>
    <property type="gene ID" value="SPAC56E4.03"/>
</dbReference>
<dbReference type="KEGG" id="spo:2543350"/>
<dbReference type="PomBase" id="SPAC56E4.03"/>
<dbReference type="VEuPathDB" id="FungiDB:SPAC56E4.03"/>
<dbReference type="eggNOG" id="KOG0634">
    <property type="taxonomic scope" value="Eukaryota"/>
</dbReference>
<dbReference type="HOGENOM" id="CLU_017584_0_5_1"/>
<dbReference type="InParanoid" id="O14192"/>
<dbReference type="OMA" id="HRPEGGM"/>
<dbReference type="PhylomeDB" id="O14192"/>
<dbReference type="Reactome" id="R-SPO-71064">
    <property type="pathway name" value="Lysine catabolism"/>
</dbReference>
<dbReference type="Reactome" id="R-SPO-71240">
    <property type="pathway name" value="Tryptophan catabolism"/>
</dbReference>
<dbReference type="PRO" id="PR:O14192"/>
<dbReference type="Proteomes" id="UP000002485">
    <property type="component" value="Chromosome I"/>
</dbReference>
<dbReference type="GO" id="GO:0005829">
    <property type="term" value="C:cytosol"/>
    <property type="evidence" value="ECO:0007005"/>
    <property type="project" value="PomBase"/>
</dbReference>
<dbReference type="GO" id="GO:0005634">
    <property type="term" value="C:nucleus"/>
    <property type="evidence" value="ECO:0007005"/>
    <property type="project" value="PomBase"/>
</dbReference>
<dbReference type="GO" id="GO:0047536">
    <property type="term" value="F:2-aminoadipate transaminase activity"/>
    <property type="evidence" value="ECO:0000318"/>
    <property type="project" value="GO_Central"/>
</dbReference>
<dbReference type="GO" id="GO:0008793">
    <property type="term" value="F:aromatic-amino-acid transaminase activity"/>
    <property type="evidence" value="ECO:0000318"/>
    <property type="project" value="GO_Central"/>
</dbReference>
<dbReference type="GO" id="GO:0030170">
    <property type="term" value="F:pyridoxal phosphate binding"/>
    <property type="evidence" value="ECO:0007669"/>
    <property type="project" value="InterPro"/>
</dbReference>
<dbReference type="GO" id="GO:0009074">
    <property type="term" value="P:aromatic amino acid family catabolic process"/>
    <property type="evidence" value="ECO:0000318"/>
    <property type="project" value="GO_Central"/>
</dbReference>
<dbReference type="GO" id="GO:0019878">
    <property type="term" value="P:lysine biosynthetic process via aminoadipic acid"/>
    <property type="evidence" value="ECO:0000318"/>
    <property type="project" value="GO_Central"/>
</dbReference>
<dbReference type="GO" id="GO:0006571">
    <property type="term" value="P:tyrosine biosynthetic process"/>
    <property type="evidence" value="ECO:0000318"/>
    <property type="project" value="GO_Central"/>
</dbReference>
<dbReference type="CDD" id="cd00609">
    <property type="entry name" value="AAT_like"/>
    <property type="match status" value="1"/>
</dbReference>
<dbReference type="FunFam" id="3.40.640.10:FF:000074">
    <property type="entry name" value="Aromatic amino acid aminotransferase"/>
    <property type="match status" value="1"/>
</dbReference>
<dbReference type="Gene3D" id="3.40.640.10">
    <property type="entry name" value="Type I PLP-dependent aspartate aminotransferase-like (Major domain)"/>
    <property type="match status" value="1"/>
</dbReference>
<dbReference type="InterPro" id="IPR004839">
    <property type="entry name" value="Aminotransferase_I/II_large"/>
</dbReference>
<dbReference type="InterPro" id="IPR050859">
    <property type="entry name" value="Class-I_PLP-dep_aminotransf"/>
</dbReference>
<dbReference type="InterPro" id="IPR015424">
    <property type="entry name" value="PyrdxlP-dep_Trfase"/>
</dbReference>
<dbReference type="InterPro" id="IPR015421">
    <property type="entry name" value="PyrdxlP-dep_Trfase_major"/>
</dbReference>
<dbReference type="PANTHER" id="PTHR42790">
    <property type="entry name" value="AMINOTRANSFERASE"/>
    <property type="match status" value="1"/>
</dbReference>
<dbReference type="PANTHER" id="PTHR42790:SF21">
    <property type="entry name" value="AROMATIC_AMINOADIPATE AMINOTRANSFERASE 1"/>
    <property type="match status" value="1"/>
</dbReference>
<dbReference type="Pfam" id="PF00155">
    <property type="entry name" value="Aminotran_1_2"/>
    <property type="match status" value="1"/>
</dbReference>
<dbReference type="SUPFAM" id="SSF53383">
    <property type="entry name" value="PLP-dependent transferases"/>
    <property type="match status" value="1"/>
</dbReference>
<protein>
    <recommendedName>
        <fullName>Aromatic amino acid aminotransferase C56E4.03</fullName>
        <ecNumber>2.6.1.57</ecNumber>
    </recommendedName>
</protein>
<organism>
    <name type="scientific">Schizosaccharomyces pombe (strain 972 / ATCC 24843)</name>
    <name type="common">Fission yeast</name>
    <dbReference type="NCBI Taxonomy" id="284812"/>
    <lineage>
        <taxon>Eukaryota</taxon>
        <taxon>Fungi</taxon>
        <taxon>Dikarya</taxon>
        <taxon>Ascomycota</taxon>
        <taxon>Taphrinomycotina</taxon>
        <taxon>Schizosaccharomycetes</taxon>
        <taxon>Schizosaccharomycetales</taxon>
        <taxon>Schizosaccharomycetaceae</taxon>
        <taxon>Schizosaccharomyces</taxon>
    </lineage>
</organism>
<name>AATR1_SCHPO</name>